<feature type="chain" id="PRO_1000147492" description="Putative pre-16S rRNA nuclease">
    <location>
        <begin position="1"/>
        <end position="139"/>
    </location>
</feature>
<reference key="1">
    <citation type="journal article" date="2009" name="PLoS Pathog.">
        <title>Genomic evidence for the evolution of Streptococcus equi: host restriction, increased virulence, and genetic exchange with human pathogens.</title>
        <authorList>
            <person name="Holden M.T.G."/>
            <person name="Heather Z."/>
            <person name="Paillot R."/>
            <person name="Steward K.F."/>
            <person name="Webb K."/>
            <person name="Ainslie F."/>
            <person name="Jourdan T."/>
            <person name="Bason N.C."/>
            <person name="Holroyd N.E."/>
            <person name="Mungall K."/>
            <person name="Quail M.A."/>
            <person name="Sanders M."/>
            <person name="Simmonds M."/>
            <person name="Willey D."/>
            <person name="Brooks K."/>
            <person name="Aanensen D.M."/>
            <person name="Spratt B.G."/>
            <person name="Jolley K.A."/>
            <person name="Maiden M.C.J."/>
            <person name="Kehoe M."/>
            <person name="Chanter N."/>
            <person name="Bentley S.D."/>
            <person name="Robinson C."/>
            <person name="Maskell D.J."/>
            <person name="Parkhill J."/>
            <person name="Waller A.S."/>
        </authorList>
    </citation>
    <scope>NUCLEOTIDE SEQUENCE [LARGE SCALE GENOMIC DNA]</scope>
    <source>
        <strain>4047</strain>
    </source>
</reference>
<protein>
    <recommendedName>
        <fullName evidence="1">Putative pre-16S rRNA nuclease</fullName>
        <ecNumber evidence="1">3.1.-.-</ecNumber>
    </recommendedName>
</protein>
<accession>C0MAR3</accession>
<evidence type="ECO:0000255" key="1">
    <source>
        <dbReference type="HAMAP-Rule" id="MF_00651"/>
    </source>
</evidence>
<organism>
    <name type="scientific">Streptococcus equi subsp. equi (strain 4047)</name>
    <dbReference type="NCBI Taxonomy" id="553482"/>
    <lineage>
        <taxon>Bacteria</taxon>
        <taxon>Bacillati</taxon>
        <taxon>Bacillota</taxon>
        <taxon>Bacilli</taxon>
        <taxon>Lactobacillales</taxon>
        <taxon>Streptococcaceae</taxon>
        <taxon>Streptococcus</taxon>
    </lineage>
</organism>
<comment type="function">
    <text evidence="1">Could be a nuclease involved in processing of the 5'-end of pre-16S rRNA.</text>
</comment>
<comment type="subcellular location">
    <subcellularLocation>
        <location evidence="1">Cytoplasm</location>
    </subcellularLocation>
</comment>
<comment type="similarity">
    <text evidence="1">Belongs to the YqgF nuclease family.</text>
</comment>
<proteinExistence type="inferred from homology"/>
<sequence>MRIMGLDVGSKTVGVAISDPLGFTAQGLEIIRINEDKQDFGFDRLAELVKQYQVDRFVIGLPKNMNNTSGPRVEASKAYGDKIEELFHIPVSYQDERLTTVEAERMLIEQADISRGKRKKVIDKLAAQLILQNYLDCNY</sequence>
<keyword id="KW-0963">Cytoplasm</keyword>
<keyword id="KW-0378">Hydrolase</keyword>
<keyword id="KW-0540">Nuclease</keyword>
<keyword id="KW-0690">Ribosome biogenesis</keyword>
<name>YQGF_STRE4</name>
<gene>
    <name type="ordered locus">SEQ_2149</name>
</gene>
<dbReference type="EC" id="3.1.-.-" evidence="1"/>
<dbReference type="EMBL" id="FM204883">
    <property type="protein sequence ID" value="CAW95508.1"/>
    <property type="molecule type" value="Genomic_DNA"/>
</dbReference>
<dbReference type="SMR" id="C0MAR3"/>
<dbReference type="KEGG" id="seu:SEQ_2149"/>
<dbReference type="HOGENOM" id="CLU_098240_2_0_9"/>
<dbReference type="OrthoDB" id="9796140at2"/>
<dbReference type="Proteomes" id="UP000001365">
    <property type="component" value="Chromosome"/>
</dbReference>
<dbReference type="GO" id="GO:0005829">
    <property type="term" value="C:cytosol"/>
    <property type="evidence" value="ECO:0007669"/>
    <property type="project" value="TreeGrafter"/>
</dbReference>
<dbReference type="GO" id="GO:0004518">
    <property type="term" value="F:nuclease activity"/>
    <property type="evidence" value="ECO:0007669"/>
    <property type="project" value="UniProtKB-KW"/>
</dbReference>
<dbReference type="GO" id="GO:0000967">
    <property type="term" value="P:rRNA 5'-end processing"/>
    <property type="evidence" value="ECO:0007669"/>
    <property type="project" value="UniProtKB-UniRule"/>
</dbReference>
<dbReference type="CDD" id="cd16964">
    <property type="entry name" value="YqgF"/>
    <property type="match status" value="1"/>
</dbReference>
<dbReference type="FunFam" id="3.30.420.140:FF:000003">
    <property type="entry name" value="Putative pre-16S rRNA nuclease"/>
    <property type="match status" value="1"/>
</dbReference>
<dbReference type="Gene3D" id="3.30.420.140">
    <property type="entry name" value="YqgF/RNase H-like domain"/>
    <property type="match status" value="1"/>
</dbReference>
<dbReference type="HAMAP" id="MF_00651">
    <property type="entry name" value="Nuclease_YqgF"/>
    <property type="match status" value="1"/>
</dbReference>
<dbReference type="InterPro" id="IPR012337">
    <property type="entry name" value="RNaseH-like_sf"/>
</dbReference>
<dbReference type="InterPro" id="IPR005227">
    <property type="entry name" value="YqgF"/>
</dbReference>
<dbReference type="InterPro" id="IPR006641">
    <property type="entry name" value="YqgF/RNaseH-like_dom"/>
</dbReference>
<dbReference type="InterPro" id="IPR037027">
    <property type="entry name" value="YqgF/RNaseH-like_dom_sf"/>
</dbReference>
<dbReference type="NCBIfam" id="TIGR00250">
    <property type="entry name" value="RNAse_H_YqgF"/>
    <property type="match status" value="1"/>
</dbReference>
<dbReference type="PANTHER" id="PTHR33317">
    <property type="entry name" value="POLYNUCLEOTIDYL TRANSFERASE, RIBONUCLEASE H-LIKE SUPERFAMILY PROTEIN"/>
    <property type="match status" value="1"/>
</dbReference>
<dbReference type="PANTHER" id="PTHR33317:SF4">
    <property type="entry name" value="POLYNUCLEOTIDYL TRANSFERASE, RIBONUCLEASE H-LIKE SUPERFAMILY PROTEIN"/>
    <property type="match status" value="1"/>
</dbReference>
<dbReference type="Pfam" id="PF03652">
    <property type="entry name" value="RuvX"/>
    <property type="match status" value="1"/>
</dbReference>
<dbReference type="SMART" id="SM00732">
    <property type="entry name" value="YqgFc"/>
    <property type="match status" value="1"/>
</dbReference>
<dbReference type="SUPFAM" id="SSF53098">
    <property type="entry name" value="Ribonuclease H-like"/>
    <property type="match status" value="1"/>
</dbReference>